<name>MUTL_STRE4</name>
<keyword id="KW-0227">DNA damage</keyword>
<keyword id="KW-0234">DNA repair</keyword>
<organism>
    <name type="scientific">Streptococcus equi subsp. equi (strain 4047)</name>
    <dbReference type="NCBI Taxonomy" id="553482"/>
    <lineage>
        <taxon>Bacteria</taxon>
        <taxon>Bacillati</taxon>
        <taxon>Bacillota</taxon>
        <taxon>Bacilli</taxon>
        <taxon>Lactobacillales</taxon>
        <taxon>Streptococcaceae</taxon>
        <taxon>Streptococcus</taxon>
    </lineage>
</organism>
<protein>
    <recommendedName>
        <fullName evidence="1">DNA mismatch repair protein MutL</fullName>
    </recommendedName>
</protein>
<sequence>MTTIIELPEVLANQIAAGEVIERPASVVKELVENAIDAKSSQITVEIEESGLKMIQITDNGEGMSHEDLPLSLRRHATSKIKSQSDLFRIRTLGFRGEALPSVASISKLTIKTATADAEHGSILVASGGKIEQLEAVSTPVGTKIKVENLFYNTPARLKYMKSLQAELAHVVDVVNRLSLAHPEIAFTLISDGKQLTQTSGAGDLRQALAGIYGLNTAKKMIDISSADLDFEVGGFVSLPELTRANRNYITILINGRYIKNFLLNRAILDGYGSKLMVGRFPIAVIDIQIDPYLADVNVHPTKQEIRISKERELMALISTAISESLREQDLIPDALENLARSSTRSFSKPEQTSLPLQPSQLYYDPQKNDFFTKETVVSEDSPQGFNHETLVDSGVKQVDNLQLAKTESEAAAPSVKYASRPDPMLSDGEHPGLDVHNKQKLSQMLDRLENEEQSVFPELDYFGQMHGTYLFAQGRDGLFIIDQHAAQERVKYEYYRDKIGEVDNSLQQLLVPYLFEFSGSDFINLQEKMSLLNEVGIYLEPYGNHTFILREHPIWMKEAEIESGVYEMCDMLLLTNEVSIKTYRAELAIMMSCKRSIKANHSLDDYSARQLLLQLAQCKNPYNCPHGRPVLINFSKADMEKMFRRIQENHTSLRELGKY</sequence>
<gene>
    <name evidence="1" type="primary">mutL</name>
    <name type="ordered locus">SEQ_2160</name>
</gene>
<feature type="chain" id="PRO_1000123216" description="DNA mismatch repair protein MutL">
    <location>
        <begin position="1"/>
        <end position="660"/>
    </location>
</feature>
<proteinExistence type="inferred from homology"/>
<accession>C0MAS4</accession>
<reference key="1">
    <citation type="journal article" date="2009" name="PLoS Pathog.">
        <title>Genomic evidence for the evolution of Streptococcus equi: host restriction, increased virulence, and genetic exchange with human pathogens.</title>
        <authorList>
            <person name="Holden M.T.G."/>
            <person name="Heather Z."/>
            <person name="Paillot R."/>
            <person name="Steward K.F."/>
            <person name="Webb K."/>
            <person name="Ainslie F."/>
            <person name="Jourdan T."/>
            <person name="Bason N.C."/>
            <person name="Holroyd N.E."/>
            <person name="Mungall K."/>
            <person name="Quail M.A."/>
            <person name="Sanders M."/>
            <person name="Simmonds M."/>
            <person name="Willey D."/>
            <person name="Brooks K."/>
            <person name="Aanensen D.M."/>
            <person name="Spratt B.G."/>
            <person name="Jolley K.A."/>
            <person name="Maiden M.C.J."/>
            <person name="Kehoe M."/>
            <person name="Chanter N."/>
            <person name="Bentley S.D."/>
            <person name="Robinson C."/>
            <person name="Maskell D.J."/>
            <person name="Parkhill J."/>
            <person name="Waller A.S."/>
        </authorList>
    </citation>
    <scope>NUCLEOTIDE SEQUENCE [LARGE SCALE GENOMIC DNA]</scope>
    <source>
        <strain>4047</strain>
    </source>
</reference>
<dbReference type="EMBL" id="FM204883">
    <property type="protein sequence ID" value="CAW95527.1"/>
    <property type="molecule type" value="Genomic_DNA"/>
</dbReference>
<dbReference type="RefSeq" id="WP_015898666.1">
    <property type="nucleotide sequence ID" value="NC_012471.1"/>
</dbReference>
<dbReference type="SMR" id="C0MAS4"/>
<dbReference type="KEGG" id="seu:SEQ_2160"/>
<dbReference type="HOGENOM" id="CLU_004131_4_1_9"/>
<dbReference type="OrthoDB" id="9763467at2"/>
<dbReference type="Proteomes" id="UP000001365">
    <property type="component" value="Chromosome"/>
</dbReference>
<dbReference type="GO" id="GO:0032300">
    <property type="term" value="C:mismatch repair complex"/>
    <property type="evidence" value="ECO:0007669"/>
    <property type="project" value="InterPro"/>
</dbReference>
<dbReference type="GO" id="GO:0005524">
    <property type="term" value="F:ATP binding"/>
    <property type="evidence" value="ECO:0007669"/>
    <property type="project" value="InterPro"/>
</dbReference>
<dbReference type="GO" id="GO:0016887">
    <property type="term" value="F:ATP hydrolysis activity"/>
    <property type="evidence" value="ECO:0007669"/>
    <property type="project" value="InterPro"/>
</dbReference>
<dbReference type="GO" id="GO:0140664">
    <property type="term" value="F:ATP-dependent DNA damage sensor activity"/>
    <property type="evidence" value="ECO:0007669"/>
    <property type="project" value="InterPro"/>
</dbReference>
<dbReference type="GO" id="GO:0030983">
    <property type="term" value="F:mismatched DNA binding"/>
    <property type="evidence" value="ECO:0007669"/>
    <property type="project" value="InterPro"/>
</dbReference>
<dbReference type="GO" id="GO:0006298">
    <property type="term" value="P:mismatch repair"/>
    <property type="evidence" value="ECO:0007669"/>
    <property type="project" value="UniProtKB-UniRule"/>
</dbReference>
<dbReference type="CDD" id="cd16926">
    <property type="entry name" value="HATPase_MutL-MLH-PMS-like"/>
    <property type="match status" value="1"/>
</dbReference>
<dbReference type="CDD" id="cd00782">
    <property type="entry name" value="MutL_Trans"/>
    <property type="match status" value="1"/>
</dbReference>
<dbReference type="FunFam" id="3.30.1370.100:FF:000004">
    <property type="entry name" value="DNA mismatch repair endonuclease MutL"/>
    <property type="match status" value="1"/>
</dbReference>
<dbReference type="FunFam" id="3.30.565.10:FF:000003">
    <property type="entry name" value="DNA mismatch repair endonuclease MutL"/>
    <property type="match status" value="1"/>
</dbReference>
<dbReference type="Gene3D" id="3.30.230.10">
    <property type="match status" value="1"/>
</dbReference>
<dbReference type="Gene3D" id="3.30.565.10">
    <property type="entry name" value="Histidine kinase-like ATPase, C-terminal domain"/>
    <property type="match status" value="1"/>
</dbReference>
<dbReference type="Gene3D" id="3.30.1540.20">
    <property type="entry name" value="MutL, C-terminal domain, dimerisation subdomain"/>
    <property type="match status" value="1"/>
</dbReference>
<dbReference type="Gene3D" id="3.30.1370.100">
    <property type="entry name" value="MutL, C-terminal domain, regulatory subdomain"/>
    <property type="match status" value="1"/>
</dbReference>
<dbReference type="HAMAP" id="MF_00149">
    <property type="entry name" value="DNA_mis_repair"/>
    <property type="match status" value="1"/>
</dbReference>
<dbReference type="InterPro" id="IPR014762">
    <property type="entry name" value="DNA_mismatch_repair_CS"/>
</dbReference>
<dbReference type="InterPro" id="IPR020667">
    <property type="entry name" value="DNA_mismatch_repair_MutL"/>
</dbReference>
<dbReference type="InterPro" id="IPR013507">
    <property type="entry name" value="DNA_mismatch_S5_2-like"/>
</dbReference>
<dbReference type="InterPro" id="IPR036890">
    <property type="entry name" value="HATPase_C_sf"/>
</dbReference>
<dbReference type="InterPro" id="IPR002099">
    <property type="entry name" value="MutL/Mlh/PMS"/>
</dbReference>
<dbReference type="InterPro" id="IPR038973">
    <property type="entry name" value="MutL/Mlh/Pms-like"/>
</dbReference>
<dbReference type="InterPro" id="IPR014790">
    <property type="entry name" value="MutL_C"/>
</dbReference>
<dbReference type="InterPro" id="IPR042120">
    <property type="entry name" value="MutL_C_dimsub"/>
</dbReference>
<dbReference type="InterPro" id="IPR042121">
    <property type="entry name" value="MutL_C_regsub"/>
</dbReference>
<dbReference type="InterPro" id="IPR037198">
    <property type="entry name" value="MutL_C_sf"/>
</dbReference>
<dbReference type="InterPro" id="IPR020568">
    <property type="entry name" value="Ribosomal_Su5_D2-typ_SF"/>
</dbReference>
<dbReference type="InterPro" id="IPR014721">
    <property type="entry name" value="Ribsml_uS5_D2-typ_fold_subgr"/>
</dbReference>
<dbReference type="NCBIfam" id="TIGR00585">
    <property type="entry name" value="mutl"/>
    <property type="match status" value="1"/>
</dbReference>
<dbReference type="NCBIfam" id="NF000950">
    <property type="entry name" value="PRK00095.1-3"/>
    <property type="match status" value="1"/>
</dbReference>
<dbReference type="PANTHER" id="PTHR10073">
    <property type="entry name" value="DNA MISMATCH REPAIR PROTEIN MLH, PMS, MUTL"/>
    <property type="match status" value="1"/>
</dbReference>
<dbReference type="PANTHER" id="PTHR10073:SF12">
    <property type="entry name" value="DNA MISMATCH REPAIR PROTEIN MLH1"/>
    <property type="match status" value="1"/>
</dbReference>
<dbReference type="Pfam" id="PF01119">
    <property type="entry name" value="DNA_mis_repair"/>
    <property type="match status" value="1"/>
</dbReference>
<dbReference type="Pfam" id="PF13589">
    <property type="entry name" value="HATPase_c_3"/>
    <property type="match status" value="1"/>
</dbReference>
<dbReference type="Pfam" id="PF08676">
    <property type="entry name" value="MutL_C"/>
    <property type="match status" value="1"/>
</dbReference>
<dbReference type="SMART" id="SM01340">
    <property type="entry name" value="DNA_mis_repair"/>
    <property type="match status" value="1"/>
</dbReference>
<dbReference type="SMART" id="SM00853">
    <property type="entry name" value="MutL_C"/>
    <property type="match status" value="1"/>
</dbReference>
<dbReference type="SUPFAM" id="SSF55874">
    <property type="entry name" value="ATPase domain of HSP90 chaperone/DNA topoisomerase II/histidine kinase"/>
    <property type="match status" value="1"/>
</dbReference>
<dbReference type="SUPFAM" id="SSF118116">
    <property type="entry name" value="DNA mismatch repair protein MutL"/>
    <property type="match status" value="1"/>
</dbReference>
<dbReference type="SUPFAM" id="SSF54211">
    <property type="entry name" value="Ribosomal protein S5 domain 2-like"/>
    <property type="match status" value="1"/>
</dbReference>
<dbReference type="PROSITE" id="PS00058">
    <property type="entry name" value="DNA_MISMATCH_REPAIR_1"/>
    <property type="match status" value="1"/>
</dbReference>
<comment type="function">
    <text evidence="1">This protein is involved in the repair of mismatches in DNA. It is required for dam-dependent methyl-directed DNA mismatch repair. May act as a 'molecular matchmaker', a protein that promotes the formation of a stable complex between two or more DNA-binding proteins in an ATP-dependent manner without itself being part of a final effector complex.</text>
</comment>
<comment type="similarity">
    <text evidence="1">Belongs to the DNA mismatch repair MutL/HexB family.</text>
</comment>
<evidence type="ECO:0000255" key="1">
    <source>
        <dbReference type="HAMAP-Rule" id="MF_00149"/>
    </source>
</evidence>